<protein>
    <recommendedName>
        <fullName>Dihydrolipoyl dehydrogenase</fullName>
        <shortName>LPD</shortName>
        <ecNumber>1.8.1.4</ecNumber>
    </recommendedName>
    <alternativeName>
        <fullName>Component of peroxynitrite reductase/peroxidase complex</fullName>
        <shortName>Component of PNR/P</shortName>
    </alternativeName>
    <alternativeName>
        <fullName>Dihydrolipoamide dehydrogenase</fullName>
    </alternativeName>
    <alternativeName>
        <fullName>E3 component of alpha-ketoacid dehydrogenase complexes</fullName>
    </alternativeName>
</protein>
<accession>P9WHH9</accession>
<accession>L0T3N4</accession>
<accession>O53747</accession>
<accession>P66004</accession>
<comment type="function">
    <text>Lipoamide dehydrogenase is an essential component of the alpha-ketoacid dehydrogenase complexes, namely the pyruvate dehydrogenase (PDH) complex, the branched-chain alpha-ketoacid dehydrogenase (BCKADH) complex, and likely also the 2-oxoglutarate dehydrogenase (ODH) complex. Catalyzes the reoxidation of dihydrolipoyl groups which are covalently attached to the lipoate acyltransferase components (E2) of the complexes. Is also able to catalyze the transhydrogenation of NADH and thio-NAD(+) in the absence of D,L-lipoamide, and the NADH-dependent reduction of quinones in vitro.</text>
</comment>
<comment type="function">
    <text>Together with AhpC, AhpD and DlaT, Lpd constitutes an NADH-dependent peroxidase active against hydrogen and alkyl peroxides as well as serving as a peroxynitrite reductase, thus protecting the bacterium against reactive nitrogen intermediates and oxidative stress generated by the host immune system.</text>
</comment>
<comment type="function">
    <text>Appears to be essential for Mtb pathogenesis.</text>
</comment>
<comment type="catalytic activity">
    <reaction evidence="2">
        <text>N(6)-[(R)-dihydrolipoyl]-L-lysyl-[protein] + NAD(+) = N(6)-[(R)-lipoyl]-L-lysyl-[protein] + NADH + H(+)</text>
        <dbReference type="Rhea" id="RHEA:15045"/>
        <dbReference type="Rhea" id="RHEA-COMP:10474"/>
        <dbReference type="Rhea" id="RHEA-COMP:10475"/>
        <dbReference type="ChEBI" id="CHEBI:15378"/>
        <dbReference type="ChEBI" id="CHEBI:57540"/>
        <dbReference type="ChEBI" id="CHEBI:57945"/>
        <dbReference type="ChEBI" id="CHEBI:83099"/>
        <dbReference type="ChEBI" id="CHEBI:83100"/>
        <dbReference type="EC" id="1.8.1.4"/>
    </reaction>
</comment>
<comment type="cofactor">
    <cofactor evidence="2">
        <name>FAD</name>
        <dbReference type="ChEBI" id="CHEBI:57692"/>
    </cofactor>
    <text evidence="2">Binds 1 FAD per subunit.</text>
</comment>
<comment type="activity regulation">
    <text evidence="6">Triazaspirodimethoxybenzoyls are high-nanomolar inhibitors of M.tuberculosis Lpd and are non-competitive versus NADH, NAD(+), and lipoamide and &gt;100-fold selective compared to human Lpd.</text>
</comment>
<comment type="biophysicochemical properties">
    <kinetics>
        <KM evidence="2 4">66 uM for NAD(+)</KM>
        <KM evidence="2 4">7.3 uM for NADH</KM>
        <KM evidence="2 4">110 uM for thio-NADH</KM>
        <KM evidence="2 4">16 mM for D,L-lipoamide</KM>
        <KM evidence="2 4">120 mM for D,L-lipoate</KM>
    </kinetics>
    <phDependence>
        <text evidence="4">Optimum pH is 8.0 for PDH complex activity. Half-maximal activity is observed at pH 7.0 and pH 9.0. Activity is abolished at pH &lt; 5.</text>
    </phDependence>
</comment>
<comment type="subunit">
    <text evidence="2 3 4 5 6 7">Homodimer. Identified in a complex with AhpC, AhpD and DlaT. Also is part of the PDH complex, consisting of multiple copies of AceE (E1), DlaT (E2) and Lpd (E3), and of the BCKADH complex, consisting of multiple copies of BkdA/BkdB (E1), BkdC (E2) and Lpd (E3).</text>
</comment>
<comment type="subcellular location">
    <subcellularLocation>
        <location evidence="8">Cytoplasm</location>
    </subcellularLocation>
</comment>
<comment type="disruption phenotype">
    <text evidence="7">Cells lacking this gene grow, albeit poorly, in standard medium with dextrose, glycerol, and fatty acids as carbon sources, but fail to grow on carbohydrates. They are less resistant than wild-type to exposition to mildly acidified nitrite, but are more resistant to oxidative stress in the form of H(2)O(2) in vitro. Lpd-deficient strains are severely attenuated in wild-type and immunodeficient mice. In contrast to wild-type or DlaT lacking strains, strains lacking Lpd are unable to grow on leucine or isoleucine. Disruption of this gene also leads to extraordinary accumulations of pyruvate and branched chain amino and keto acids.</text>
</comment>
<comment type="miscellaneous">
    <text>The active site is a redox-active disulfide bond.</text>
</comment>
<comment type="similarity">
    <text evidence="8">Belongs to the class-I pyridine nucleotide-disulfide oxidoreductase family.</text>
</comment>
<proteinExistence type="evidence at protein level"/>
<organism>
    <name type="scientific">Mycobacterium tuberculosis (strain ATCC 25618 / H37Rv)</name>
    <dbReference type="NCBI Taxonomy" id="83332"/>
    <lineage>
        <taxon>Bacteria</taxon>
        <taxon>Bacillati</taxon>
        <taxon>Actinomycetota</taxon>
        <taxon>Actinomycetes</taxon>
        <taxon>Mycobacteriales</taxon>
        <taxon>Mycobacteriaceae</taxon>
        <taxon>Mycobacterium</taxon>
        <taxon>Mycobacterium tuberculosis complex</taxon>
    </lineage>
</organism>
<keyword id="KW-0002">3D-structure</keyword>
<keyword id="KW-0049">Antioxidant</keyword>
<keyword id="KW-0963">Cytoplasm</keyword>
<keyword id="KW-1015">Disulfide bond</keyword>
<keyword id="KW-0274">FAD</keyword>
<keyword id="KW-0285">Flavoprotein</keyword>
<keyword id="KW-0520">NAD</keyword>
<keyword id="KW-0560">Oxidoreductase</keyword>
<keyword id="KW-0676">Redox-active center</keyword>
<keyword id="KW-1185">Reference proteome</keyword>
<keyword id="KW-0843">Virulence</keyword>
<gene>
    <name type="primary">lpdC</name>
    <name type="synonym">lpd</name>
    <name type="ordered locus">Rv0462</name>
    <name type="ORF">MTV038.06</name>
</gene>
<feature type="chain" id="PRO_0000068034" description="Dihydrolipoyl dehydrogenase">
    <location>
        <begin position="1"/>
        <end position="464"/>
    </location>
</feature>
<feature type="active site" description="Proton acceptor" evidence="1">
    <location>
        <position position="443"/>
    </location>
</feature>
<feature type="binding site" evidence="5 6">
    <location>
        <begin position="33"/>
        <end position="41"/>
    </location>
    <ligand>
        <name>FAD</name>
        <dbReference type="ChEBI" id="CHEBI:57692"/>
    </ligand>
</feature>
<feature type="binding site" evidence="5 6">
    <location>
        <position position="50"/>
    </location>
    <ligand>
        <name>FAD</name>
        <dbReference type="ChEBI" id="CHEBI:57692"/>
    </ligand>
</feature>
<feature type="binding site" evidence="1">
    <location>
        <position position="113"/>
    </location>
    <ligand>
        <name>FAD</name>
        <dbReference type="ChEBI" id="CHEBI:57692"/>
    </ligand>
</feature>
<feature type="binding site" evidence="1">
    <location>
        <begin position="178"/>
        <end position="182"/>
    </location>
    <ligand>
        <name>NAD(+)</name>
        <dbReference type="ChEBI" id="CHEBI:57540"/>
    </ligand>
</feature>
<feature type="binding site" evidence="1">
    <location>
        <position position="201"/>
    </location>
    <ligand>
        <name>NAD(+)</name>
        <dbReference type="ChEBI" id="CHEBI:57540"/>
    </ligand>
</feature>
<feature type="binding site" evidence="1">
    <location>
        <begin position="266"/>
        <end position="269"/>
    </location>
    <ligand>
        <name>NAD(+)</name>
        <dbReference type="ChEBI" id="CHEBI:57540"/>
    </ligand>
</feature>
<feature type="binding site" evidence="5 6">
    <location>
        <position position="309"/>
    </location>
    <ligand>
        <name>FAD</name>
        <dbReference type="ChEBI" id="CHEBI:57692"/>
    </ligand>
</feature>
<feature type="binding site" evidence="5 6">
    <location>
        <position position="317"/>
    </location>
    <ligand>
        <name>FAD</name>
        <dbReference type="ChEBI" id="CHEBI:57692"/>
    </ligand>
</feature>
<feature type="disulfide bond" description="Redox-active" evidence="5">
    <location>
        <begin position="41"/>
        <end position="46"/>
    </location>
</feature>
<feature type="mutagenesis site" description="Reduces lipoamide dehydrogenase activity by 95%." evidence="5">
    <original>D</original>
    <variation>A</variation>
    <location>
        <position position="5"/>
    </location>
</feature>
<feature type="mutagenesis site" description="Reduces lipoamide dehydrogenase activity by 89%." evidence="5">
    <original>N</original>
    <variation>A</variation>
    <location>
        <position position="43"/>
    </location>
</feature>
<feature type="mutagenesis site" description="Reduces lipoamide dehydrogenase activity by 94%." evidence="5">
    <original>R</original>
    <variation>A</variation>
    <location>
        <position position="93"/>
    </location>
</feature>
<feature type="mutagenesis site" description="Reduces lipoamide dehydrogenase activity by 96%." evidence="5">
    <original>R</original>
    <variation>E</variation>
    <location>
        <position position="93"/>
    </location>
</feature>
<feature type="mutagenesis site" description="Reduces lipoamide dehydrogenase activity by 82%." evidence="5">
    <original>K</original>
    <variation>E</variation>
    <location>
        <position position="103"/>
    </location>
</feature>
<feature type="mutagenesis site" description="Reduces lipoamide dehydrogenase activity by 91%." evidence="5">
    <original>H</original>
    <variation>K</variation>
    <location>
        <position position="386"/>
    </location>
</feature>
<feature type="mutagenesis site" description="Reduces lipoamide dehydrogenase activity by 95%." evidence="5">
    <original>F</original>
    <variation>A</variation>
    <location>
        <position position="464"/>
    </location>
</feature>
<feature type="strand" evidence="10">
    <location>
        <begin position="2"/>
        <end position="9"/>
    </location>
</feature>
<feature type="helix" evidence="10">
    <location>
        <begin position="13"/>
        <end position="24"/>
    </location>
</feature>
<feature type="strand" evidence="10">
    <location>
        <begin position="29"/>
        <end position="32"/>
    </location>
</feature>
<feature type="helix" evidence="10">
    <location>
        <begin position="39"/>
        <end position="44"/>
    </location>
</feature>
<feature type="helix" evidence="10">
    <location>
        <begin position="46"/>
        <end position="65"/>
    </location>
</feature>
<feature type="helix" evidence="10">
    <location>
        <begin position="67"/>
        <end position="69"/>
    </location>
</feature>
<feature type="strand" evidence="10">
    <location>
        <begin position="71"/>
        <end position="73"/>
    </location>
</feature>
<feature type="helix" evidence="10">
    <location>
        <begin position="79"/>
        <end position="103"/>
    </location>
</feature>
<feature type="strand" evidence="10">
    <location>
        <begin position="107"/>
        <end position="109"/>
    </location>
</feature>
<feature type="strand" evidence="10">
    <location>
        <begin position="111"/>
        <end position="117"/>
    </location>
</feature>
<feature type="strand" evidence="10">
    <location>
        <begin position="120"/>
        <end position="125"/>
    </location>
</feature>
<feature type="strand" evidence="10">
    <location>
        <begin position="130"/>
        <end position="140"/>
    </location>
</feature>
<feature type="strand" evidence="10">
    <location>
        <begin position="144"/>
        <end position="146"/>
    </location>
</feature>
<feature type="strand" evidence="9">
    <location>
        <begin position="156"/>
        <end position="159"/>
    </location>
</feature>
<feature type="helix" evidence="10">
    <location>
        <begin position="161"/>
        <end position="165"/>
    </location>
</feature>
<feature type="strand" evidence="10">
    <location>
        <begin position="172"/>
        <end position="177"/>
    </location>
</feature>
<feature type="helix" evidence="10">
    <location>
        <begin position="181"/>
        <end position="192"/>
    </location>
</feature>
<feature type="strand" evidence="10">
    <location>
        <begin position="196"/>
        <end position="200"/>
    </location>
</feature>
<feature type="strand" evidence="10">
    <location>
        <begin position="202"/>
        <end position="207"/>
    </location>
</feature>
<feature type="helix" evidence="10">
    <location>
        <begin position="212"/>
        <end position="225"/>
    </location>
</feature>
<feature type="strand" evidence="10">
    <location>
        <begin position="228"/>
        <end position="230"/>
    </location>
</feature>
<feature type="strand" evidence="10">
    <location>
        <begin position="234"/>
        <end position="240"/>
    </location>
</feature>
<feature type="strand" evidence="10">
    <location>
        <begin position="245"/>
        <end position="251"/>
    </location>
</feature>
<feature type="strand" evidence="10">
    <location>
        <begin position="254"/>
        <end position="265"/>
    </location>
</feature>
<feature type="strand" evidence="10">
    <location>
        <begin position="269"/>
        <end position="271"/>
    </location>
</feature>
<feature type="strand" evidence="10">
    <location>
        <begin position="274"/>
        <end position="276"/>
    </location>
</feature>
<feature type="helix" evidence="10">
    <location>
        <begin position="278"/>
        <end position="281"/>
    </location>
</feature>
<feature type="strand" evidence="10">
    <location>
        <begin position="289"/>
        <end position="291"/>
    </location>
</feature>
<feature type="strand" evidence="10">
    <location>
        <begin position="304"/>
        <end position="306"/>
    </location>
</feature>
<feature type="helix" evidence="10">
    <location>
        <begin position="308"/>
        <end position="311"/>
    </location>
</feature>
<feature type="helix" evidence="10">
    <location>
        <begin position="317"/>
        <end position="332"/>
    </location>
</feature>
<feature type="helix" evidence="10">
    <location>
        <begin position="342"/>
        <end position="344"/>
    </location>
</feature>
<feature type="strand" evidence="10">
    <location>
        <begin position="345"/>
        <end position="349"/>
    </location>
</feature>
<feature type="strand" evidence="10">
    <location>
        <begin position="351"/>
        <end position="359"/>
    </location>
</feature>
<feature type="helix" evidence="10">
    <location>
        <begin position="362"/>
        <end position="367"/>
    </location>
</feature>
<feature type="strand" evidence="10">
    <location>
        <begin position="372"/>
        <end position="378"/>
    </location>
</feature>
<feature type="helix" evidence="10">
    <location>
        <begin position="379"/>
        <end position="381"/>
    </location>
</feature>
<feature type="helix" evidence="10">
    <location>
        <begin position="383"/>
        <end position="388"/>
    </location>
</feature>
<feature type="strand" evidence="10">
    <location>
        <begin position="394"/>
        <end position="400"/>
    </location>
</feature>
<feature type="turn" evidence="10">
    <location>
        <begin position="401"/>
        <end position="403"/>
    </location>
</feature>
<feature type="strand" evidence="10">
    <location>
        <begin position="406"/>
        <end position="413"/>
    </location>
</feature>
<feature type="helix" evidence="10">
    <location>
        <begin position="416"/>
        <end position="419"/>
    </location>
</feature>
<feature type="helix" evidence="10">
    <location>
        <begin position="420"/>
        <end position="428"/>
    </location>
</feature>
<feature type="helix" evidence="10">
    <location>
        <begin position="433"/>
        <end position="436"/>
    </location>
</feature>
<feature type="strand" evidence="9">
    <location>
        <begin position="443"/>
        <end position="445"/>
    </location>
</feature>
<feature type="helix" evidence="10">
    <location>
        <begin position="448"/>
        <end position="458"/>
    </location>
</feature>
<name>DLDH_MYCTU</name>
<sequence>MTHYDVVVLGAGPGGYVAAIRAAQLGLSTAIVEPKYWGGVCLNVGCIPSKALLRNAELVHIFTKDAKAFGISGEVTFDYGIAYDRSRKVAEGRVAGVHFLMKKNKITEIHGYGTFADANTLLVDLNDGGTESVTFDNAIIATGSSTRLVPGTSLSANVVTYEEQILSRELPKSIIIAGAGAIGMEFGYVLKNYGVDVTIVEFLPRALPNEDADVSKEIEKQFKKLGVTILTATKVESIADGGSQVTVTVTKDGVAQELKAEKVLQAIGFAPNVEGYGLDKAGVALTDRKAIGVDDYMRTNVGHIYAIGDVNGLLQLAHVAEAQGVVAAETIAGAETLTLGDHRMLPRATFCQPNVASFGLTEQQARNEGYDVVVAKFPFTANAKAHGVGDPSGFVKLVADAKHGELLGGHLVGHDVAELLPELTLAQRWDLTASELARNVHTHPTMSEALQECFHGLVGHMINF</sequence>
<reference key="1">
    <citation type="journal article" date="1998" name="Nature">
        <title>Deciphering the biology of Mycobacterium tuberculosis from the complete genome sequence.</title>
        <authorList>
            <person name="Cole S.T."/>
            <person name="Brosch R."/>
            <person name="Parkhill J."/>
            <person name="Garnier T."/>
            <person name="Churcher C.M."/>
            <person name="Harris D.E."/>
            <person name="Gordon S.V."/>
            <person name="Eiglmeier K."/>
            <person name="Gas S."/>
            <person name="Barry C.E. III"/>
            <person name="Tekaia F."/>
            <person name="Badcock K."/>
            <person name="Basham D."/>
            <person name="Brown D."/>
            <person name="Chillingworth T."/>
            <person name="Connor R."/>
            <person name="Davies R.M."/>
            <person name="Devlin K."/>
            <person name="Feltwell T."/>
            <person name="Gentles S."/>
            <person name="Hamlin N."/>
            <person name="Holroyd S."/>
            <person name="Hornsby T."/>
            <person name="Jagels K."/>
            <person name="Krogh A."/>
            <person name="McLean J."/>
            <person name="Moule S."/>
            <person name="Murphy L.D."/>
            <person name="Oliver S."/>
            <person name="Osborne J."/>
            <person name="Quail M.A."/>
            <person name="Rajandream M.A."/>
            <person name="Rogers J."/>
            <person name="Rutter S."/>
            <person name="Seeger K."/>
            <person name="Skelton S."/>
            <person name="Squares S."/>
            <person name="Squares R."/>
            <person name="Sulston J.E."/>
            <person name="Taylor K."/>
            <person name="Whitehead S."/>
            <person name="Barrell B.G."/>
        </authorList>
    </citation>
    <scope>NUCLEOTIDE SEQUENCE [LARGE SCALE GENOMIC DNA]</scope>
    <source>
        <strain>ATCC 25618 / H37Rv</strain>
    </source>
</reference>
<reference key="2">
    <citation type="journal article" date="2001" name="Biochemistry">
        <title>Mycobacterium tuberculosis lipoamide dehydrogenase is encoded by Rv0462 and not by the lpdA or lpdB genes.</title>
        <authorList>
            <person name="Argyrou A."/>
            <person name="Blanchard J.S."/>
        </authorList>
    </citation>
    <scope>FUNCTION</scope>
    <scope>CATALYTIC ACTIVITY</scope>
    <scope>SUBSTRATE SPECIFICITY</scope>
    <scope>KINETIC PARAMETERS</scope>
    <scope>COFACTOR</scope>
    <scope>GENE NAME</scope>
    <scope>SUBUNIT</scope>
    <scope>REACTION MECHANISM</scope>
    <source>
        <strain>ATCC 25618 / H37Rv</strain>
    </source>
</reference>
<reference key="3">
    <citation type="journal article" date="2002" name="Science">
        <title>Metabolic enzymes of mycobacteria linked to antioxidant defense by a thioredoxin-like protein.</title>
        <authorList>
            <person name="Bryk R."/>
            <person name="Lima C.D."/>
            <person name="Erdjument-Bromage H."/>
            <person name="Tempst P."/>
            <person name="Nathan C."/>
        </authorList>
    </citation>
    <scope>FUNCTION AS AN ANTIOXIDANT</scope>
    <scope>SUBUNIT</scope>
    <source>
        <strain>ATCC 25618 / H37Rv</strain>
    </source>
</reference>
<reference key="4">
    <citation type="journal article" date="2005" name="Mol. Microbiol.">
        <title>Mycobacterium tuberculosis appears to lack alpha-ketoglutarate dehydrogenase and encodes pyruvate dehydrogenase in widely separated genes.</title>
        <authorList>
            <person name="Tian J."/>
            <person name="Bryk R."/>
            <person name="Shi S."/>
            <person name="Erdjument-Bromage H."/>
            <person name="Tempst P."/>
            <person name="Nathan C."/>
        </authorList>
    </citation>
    <scope>FUNCTION AS A PDH COMPONENT</scope>
    <scope>BIOPHYSICOCHEMICAL PROPERTIES</scope>
    <scope>IDENTIFICATION IN THE PDH COMPLEX</scope>
    <source>
        <strain>ATCC 25618 / H37Rv</strain>
    </source>
</reference>
<reference key="5">
    <citation type="journal article" date="2011" name="Cell Host Microbe">
        <title>Virulence of Mycobacterium tuberculosis depends on lipoamide dehydrogenase, a member of three multienzyme complexes.</title>
        <authorList>
            <person name="Venugopal A."/>
            <person name="Bryk R."/>
            <person name="Shi S."/>
            <person name="Rhee K."/>
            <person name="Rath P."/>
            <person name="Schnappinger D."/>
            <person name="Ehrt S."/>
            <person name="Nathan C."/>
        </authorList>
    </citation>
    <scope>FUNCTION AS A BCKADH COMPONENT</scope>
    <scope>ROLE IN VIRULENCE</scope>
    <scope>DISRUPTION PHENOTYPE</scope>
    <scope>IDENTIFICATION IN THE BCKADH COMPLEX</scope>
    <source>
        <strain>ATCC 25618 / H37Rv</strain>
    </source>
</reference>
<reference key="6">
    <citation type="journal article" date="2011" name="Mol. Cell. Proteomics">
        <title>Proteogenomic analysis of Mycobacterium tuberculosis by high resolution mass spectrometry.</title>
        <authorList>
            <person name="Kelkar D.S."/>
            <person name="Kumar D."/>
            <person name="Kumar P."/>
            <person name="Balakrishnan L."/>
            <person name="Muthusamy B."/>
            <person name="Yadav A.K."/>
            <person name="Shrivastava P."/>
            <person name="Marimuthu A."/>
            <person name="Anand S."/>
            <person name="Sundaram H."/>
            <person name="Kingsbury R."/>
            <person name="Harsha H.C."/>
            <person name="Nair B."/>
            <person name="Prasad T.S."/>
            <person name="Chauhan D.S."/>
            <person name="Katoch K."/>
            <person name="Katoch V.M."/>
            <person name="Kumar P."/>
            <person name="Chaerkady R."/>
            <person name="Ramachandran S."/>
            <person name="Dash D."/>
            <person name="Pandey A."/>
        </authorList>
    </citation>
    <scope>IDENTIFICATION BY MASS SPECTROMETRY [LARGE SCALE ANALYSIS]</scope>
    <source>
        <strain>ATCC 25618 / H37Rv</strain>
    </source>
</reference>
<reference key="7">
    <citation type="journal article" date="2005" name="J. Biol. Chem.">
        <title>Crystal structure and functional analysis of lipoamide dehydrogenase from Mycobacterium tuberculosis.</title>
        <authorList>
            <person name="Rajashankar K.R."/>
            <person name="Bryk R."/>
            <person name="Kniewel R."/>
            <person name="Buglino J.A."/>
            <person name="Nathan C.F."/>
            <person name="Lima C.D."/>
        </authorList>
    </citation>
    <scope>X-RAY CRYSTALLOGRAPHY (2.4 ANGSTROMS) IN COMPLEX WITH FAD</scope>
    <scope>DISULFIDE BOND</scope>
    <scope>SUBUNIT</scope>
    <scope>FUNCTION</scope>
    <scope>MUTAGENESIS OF ASP-5; ASN-43; ARG-93; LYS-103; HIS-386 AND PHE-464</scope>
</reference>
<reference key="8">
    <citation type="journal article" date="2010" name="Biochemistry">
        <title>Triazaspirodimethoxybenzoyls as selective inhibitors of mycobacterial lipoamide dehydrogenase.</title>
        <authorList>
            <person name="Bryk R."/>
            <person name="Arango N."/>
            <person name="Venugopal A."/>
            <person name="Warren J.D."/>
            <person name="Park Y.H."/>
            <person name="Patel M.S."/>
            <person name="Lima C.D."/>
            <person name="Nathan C."/>
        </authorList>
    </citation>
    <scope>X-RAY CRYSTALLOGRAPHY (2.42 ANGSTROMS) IN COMPLEX WITH INHIBITOR AND FAD</scope>
    <scope>ACTIVITY REGULATION</scope>
    <scope>INHIBITORS</scope>
    <source>
        <strain>ATCC 25618 / H37Rv</strain>
    </source>
</reference>
<evidence type="ECO:0000250" key="1"/>
<evidence type="ECO:0000269" key="2">
    <source>
    </source>
</evidence>
<evidence type="ECO:0000269" key="3">
    <source>
    </source>
</evidence>
<evidence type="ECO:0000269" key="4">
    <source>
    </source>
</evidence>
<evidence type="ECO:0000269" key="5">
    <source>
    </source>
</evidence>
<evidence type="ECO:0000269" key="6">
    <source>
    </source>
</evidence>
<evidence type="ECO:0000269" key="7">
    <source>
    </source>
</evidence>
<evidence type="ECO:0000305" key="8"/>
<evidence type="ECO:0007829" key="9">
    <source>
        <dbReference type="PDB" id="8CT4"/>
    </source>
</evidence>
<evidence type="ECO:0007829" key="10">
    <source>
        <dbReference type="PDB" id="8U0Q"/>
    </source>
</evidence>
<dbReference type="EC" id="1.8.1.4"/>
<dbReference type="EMBL" id="AL123456">
    <property type="protein sequence ID" value="CCP43195.1"/>
    <property type="molecule type" value="Genomic_DNA"/>
</dbReference>
<dbReference type="PIR" id="B70828">
    <property type="entry name" value="B70828"/>
</dbReference>
<dbReference type="RefSeq" id="NP_214976.1">
    <property type="nucleotide sequence ID" value="NC_000962.3"/>
</dbReference>
<dbReference type="PDB" id="2A8X">
    <property type="method" value="X-ray"/>
    <property type="resolution" value="2.40 A"/>
    <property type="chains" value="A/B=1-464"/>
</dbReference>
<dbReference type="PDB" id="3II4">
    <property type="method" value="X-ray"/>
    <property type="resolution" value="2.42 A"/>
    <property type="chains" value="A/B=1-464"/>
</dbReference>
<dbReference type="PDB" id="4M52">
    <property type="method" value="X-ray"/>
    <property type="resolution" value="2.40 A"/>
    <property type="chains" value="A/B/C/D=1-464"/>
</dbReference>
<dbReference type="PDB" id="7KMY">
    <property type="method" value="X-ray"/>
    <property type="resolution" value="2.21 A"/>
    <property type="chains" value="A/B/C/D/I/J/M/N=1-464"/>
</dbReference>
<dbReference type="PDB" id="8CT4">
    <property type="method" value="EM"/>
    <property type="resolution" value="2.17 A"/>
    <property type="chains" value="A/B=1-464"/>
</dbReference>
<dbReference type="PDB" id="8U0Q">
    <property type="method" value="X-ray"/>
    <property type="resolution" value="1.69 A"/>
    <property type="chains" value="A/B=1-464"/>
</dbReference>
<dbReference type="PDBsum" id="2A8X"/>
<dbReference type="PDBsum" id="3II4"/>
<dbReference type="PDBsum" id="4M52"/>
<dbReference type="PDBsum" id="7KMY"/>
<dbReference type="PDBsum" id="8CT4"/>
<dbReference type="PDBsum" id="8U0Q"/>
<dbReference type="EMDB" id="EMD-26981"/>
<dbReference type="SMR" id="P9WHH9"/>
<dbReference type="FunCoup" id="P9WHH9">
    <property type="interactions" value="621"/>
</dbReference>
<dbReference type="STRING" id="83332.Rv0462"/>
<dbReference type="BindingDB" id="P9WHH9"/>
<dbReference type="ChEMBL" id="CHEMBL3988585"/>
<dbReference type="PaxDb" id="83332-Rv0462"/>
<dbReference type="DNASU" id="886300"/>
<dbReference type="GeneID" id="886300"/>
<dbReference type="KEGG" id="mtu:Rv0462"/>
<dbReference type="KEGG" id="mtv:RVBD_0462"/>
<dbReference type="TubercuList" id="Rv0462"/>
<dbReference type="eggNOG" id="COG1249">
    <property type="taxonomic scope" value="Bacteria"/>
</dbReference>
<dbReference type="InParanoid" id="P9WHH9"/>
<dbReference type="OrthoDB" id="9800167at2"/>
<dbReference type="PhylomeDB" id="P9WHH9"/>
<dbReference type="BRENDA" id="1.8.1.4">
    <property type="organism ID" value="3445"/>
</dbReference>
<dbReference type="Reactome" id="R-HSA-1222541">
    <property type="pathway name" value="Cell redox homeostasis"/>
</dbReference>
<dbReference type="Reactome" id="R-HSA-9636383">
    <property type="pathway name" value="Prevention of phagosomal-lysosomal fusion"/>
</dbReference>
<dbReference type="SABIO-RK" id="P9WHH9"/>
<dbReference type="EvolutionaryTrace" id="P9WHH9"/>
<dbReference type="PHI-base" id="PHI:7582"/>
<dbReference type="Proteomes" id="UP000001584">
    <property type="component" value="Chromosome"/>
</dbReference>
<dbReference type="GO" id="GO:0005829">
    <property type="term" value="C:cytosol"/>
    <property type="evidence" value="ECO:0007005"/>
    <property type="project" value="MTBBASE"/>
</dbReference>
<dbReference type="GO" id="GO:0005576">
    <property type="term" value="C:extracellular region"/>
    <property type="evidence" value="ECO:0000314"/>
    <property type="project" value="CAFA"/>
</dbReference>
<dbReference type="GO" id="GO:0005886">
    <property type="term" value="C:plasma membrane"/>
    <property type="evidence" value="ECO:0007005"/>
    <property type="project" value="MTBBASE"/>
</dbReference>
<dbReference type="GO" id="GO:0045254">
    <property type="term" value="C:pyruvate dehydrogenase complex"/>
    <property type="evidence" value="ECO:0000314"/>
    <property type="project" value="MTBBASE"/>
</dbReference>
<dbReference type="GO" id="GO:0016209">
    <property type="term" value="F:antioxidant activity"/>
    <property type="evidence" value="ECO:0007669"/>
    <property type="project" value="UniProtKB-KW"/>
</dbReference>
<dbReference type="GO" id="GO:0004148">
    <property type="term" value="F:dihydrolipoyl dehydrogenase (NADH) activity"/>
    <property type="evidence" value="ECO:0000314"/>
    <property type="project" value="MTBBASE"/>
</dbReference>
<dbReference type="GO" id="GO:0015036">
    <property type="term" value="F:disulfide oxidoreductase activity"/>
    <property type="evidence" value="ECO:0000314"/>
    <property type="project" value="MTBBASE"/>
</dbReference>
<dbReference type="GO" id="GO:0050660">
    <property type="term" value="F:flavin adenine dinucleotide binding"/>
    <property type="evidence" value="ECO:0000314"/>
    <property type="project" value="MTBBASE"/>
</dbReference>
<dbReference type="GO" id="GO:0070404">
    <property type="term" value="F:NADH binding"/>
    <property type="evidence" value="ECO:0000314"/>
    <property type="project" value="MTBBASE"/>
</dbReference>
<dbReference type="GO" id="GO:0016655">
    <property type="term" value="F:oxidoreductase activity, acting on NAD(P)H, quinone or similar compound as acceptor"/>
    <property type="evidence" value="ECO:0000314"/>
    <property type="project" value="MTBBASE"/>
</dbReference>
<dbReference type="GO" id="GO:0035375">
    <property type="term" value="F:zymogen binding"/>
    <property type="evidence" value="ECO:0000353"/>
    <property type="project" value="CAFA"/>
</dbReference>
<dbReference type="GO" id="GO:0006103">
    <property type="term" value="P:2-oxoglutarate metabolic process"/>
    <property type="evidence" value="ECO:0000318"/>
    <property type="project" value="GO_Central"/>
</dbReference>
<dbReference type="GO" id="GO:0045454">
    <property type="term" value="P:cell redox homeostasis"/>
    <property type="evidence" value="ECO:0000314"/>
    <property type="project" value="MTBBASE"/>
</dbReference>
<dbReference type="GO" id="GO:0006090">
    <property type="term" value="P:pyruvate metabolic process"/>
    <property type="evidence" value="ECO:0000318"/>
    <property type="project" value="GO_Central"/>
</dbReference>
<dbReference type="FunFam" id="3.30.390.30:FF:000001">
    <property type="entry name" value="Dihydrolipoyl dehydrogenase"/>
    <property type="match status" value="1"/>
</dbReference>
<dbReference type="FunFam" id="3.50.50.60:FF:000212">
    <property type="entry name" value="Dihydrolipoyl dehydrogenase"/>
    <property type="match status" value="1"/>
</dbReference>
<dbReference type="Gene3D" id="3.30.390.30">
    <property type="match status" value="1"/>
</dbReference>
<dbReference type="Gene3D" id="3.50.50.60">
    <property type="entry name" value="FAD/NAD(P)-binding domain"/>
    <property type="match status" value="2"/>
</dbReference>
<dbReference type="InterPro" id="IPR050151">
    <property type="entry name" value="Class-I_Pyr_Nuc-Dis_Oxidored"/>
</dbReference>
<dbReference type="InterPro" id="IPR036188">
    <property type="entry name" value="FAD/NAD-bd_sf"/>
</dbReference>
<dbReference type="InterPro" id="IPR023753">
    <property type="entry name" value="FAD/NAD-binding_dom"/>
</dbReference>
<dbReference type="InterPro" id="IPR016156">
    <property type="entry name" value="FAD/NAD-linked_Rdtase_dimer_sf"/>
</dbReference>
<dbReference type="InterPro" id="IPR006258">
    <property type="entry name" value="Lipoamide_DH"/>
</dbReference>
<dbReference type="InterPro" id="IPR001100">
    <property type="entry name" value="Pyr_nuc-diS_OxRdtase"/>
</dbReference>
<dbReference type="InterPro" id="IPR004099">
    <property type="entry name" value="Pyr_nucl-diS_OxRdtase_dimer"/>
</dbReference>
<dbReference type="InterPro" id="IPR012999">
    <property type="entry name" value="Pyr_OxRdtase_I_AS"/>
</dbReference>
<dbReference type="NCBIfam" id="TIGR01350">
    <property type="entry name" value="lipoamide_DH"/>
    <property type="match status" value="1"/>
</dbReference>
<dbReference type="PANTHER" id="PTHR22912:SF217">
    <property type="entry name" value="DIHYDROLIPOYL DEHYDROGENASE"/>
    <property type="match status" value="1"/>
</dbReference>
<dbReference type="PANTHER" id="PTHR22912">
    <property type="entry name" value="DISULFIDE OXIDOREDUCTASE"/>
    <property type="match status" value="1"/>
</dbReference>
<dbReference type="Pfam" id="PF07992">
    <property type="entry name" value="Pyr_redox_2"/>
    <property type="match status" value="1"/>
</dbReference>
<dbReference type="Pfam" id="PF02852">
    <property type="entry name" value="Pyr_redox_dim"/>
    <property type="match status" value="1"/>
</dbReference>
<dbReference type="PIRSF" id="PIRSF000350">
    <property type="entry name" value="Mercury_reductase_MerA"/>
    <property type="match status" value="1"/>
</dbReference>
<dbReference type="PRINTS" id="PR00368">
    <property type="entry name" value="FADPNR"/>
</dbReference>
<dbReference type="PRINTS" id="PR00411">
    <property type="entry name" value="PNDRDTASEI"/>
</dbReference>
<dbReference type="SUPFAM" id="SSF51905">
    <property type="entry name" value="FAD/NAD(P)-binding domain"/>
    <property type="match status" value="1"/>
</dbReference>
<dbReference type="SUPFAM" id="SSF55424">
    <property type="entry name" value="FAD/NAD-linked reductases, dimerisation (C-terminal) domain"/>
    <property type="match status" value="1"/>
</dbReference>
<dbReference type="PROSITE" id="PS00076">
    <property type="entry name" value="PYRIDINE_REDOX_1"/>
    <property type="match status" value="1"/>
</dbReference>